<accession>Q9CD42</accession>
<name>ENO_MYCLE</name>
<dbReference type="EC" id="4.2.1.11" evidence="1"/>
<dbReference type="EMBL" id="AL583917">
    <property type="protein sequence ID" value="CAC29763.1"/>
    <property type="status" value="ALT_INIT"/>
    <property type="molecule type" value="Genomic_DNA"/>
</dbReference>
<dbReference type="PIR" id="G86940">
    <property type="entry name" value="G86940"/>
</dbReference>
<dbReference type="RefSeq" id="WP_041323663.1">
    <property type="nucleotide sequence ID" value="NC_002677.1"/>
</dbReference>
<dbReference type="SMR" id="Q9CD42"/>
<dbReference type="STRING" id="272631.gene:17574073"/>
<dbReference type="KEGG" id="mle:ML0255"/>
<dbReference type="Leproma" id="ML0255"/>
<dbReference type="eggNOG" id="COG0148">
    <property type="taxonomic scope" value="Bacteria"/>
</dbReference>
<dbReference type="HOGENOM" id="CLU_031223_2_1_11"/>
<dbReference type="UniPathway" id="UPA00109">
    <property type="reaction ID" value="UER00187"/>
</dbReference>
<dbReference type="Proteomes" id="UP000000806">
    <property type="component" value="Chromosome"/>
</dbReference>
<dbReference type="GO" id="GO:0009986">
    <property type="term" value="C:cell surface"/>
    <property type="evidence" value="ECO:0007669"/>
    <property type="project" value="UniProtKB-SubCell"/>
</dbReference>
<dbReference type="GO" id="GO:0005576">
    <property type="term" value="C:extracellular region"/>
    <property type="evidence" value="ECO:0007669"/>
    <property type="project" value="UniProtKB-SubCell"/>
</dbReference>
<dbReference type="GO" id="GO:0000015">
    <property type="term" value="C:phosphopyruvate hydratase complex"/>
    <property type="evidence" value="ECO:0007669"/>
    <property type="project" value="InterPro"/>
</dbReference>
<dbReference type="GO" id="GO:0000287">
    <property type="term" value="F:magnesium ion binding"/>
    <property type="evidence" value="ECO:0007669"/>
    <property type="project" value="UniProtKB-UniRule"/>
</dbReference>
<dbReference type="GO" id="GO:0004634">
    <property type="term" value="F:phosphopyruvate hydratase activity"/>
    <property type="evidence" value="ECO:0007669"/>
    <property type="project" value="UniProtKB-UniRule"/>
</dbReference>
<dbReference type="GO" id="GO:0006096">
    <property type="term" value="P:glycolytic process"/>
    <property type="evidence" value="ECO:0007669"/>
    <property type="project" value="UniProtKB-UniRule"/>
</dbReference>
<dbReference type="CDD" id="cd03313">
    <property type="entry name" value="enolase"/>
    <property type="match status" value="1"/>
</dbReference>
<dbReference type="FunFam" id="3.20.20.120:FF:000001">
    <property type="entry name" value="Enolase"/>
    <property type="match status" value="1"/>
</dbReference>
<dbReference type="FunFam" id="3.30.390.10:FF:000001">
    <property type="entry name" value="Enolase"/>
    <property type="match status" value="1"/>
</dbReference>
<dbReference type="Gene3D" id="3.20.20.120">
    <property type="entry name" value="Enolase-like C-terminal domain"/>
    <property type="match status" value="1"/>
</dbReference>
<dbReference type="Gene3D" id="3.30.390.10">
    <property type="entry name" value="Enolase-like, N-terminal domain"/>
    <property type="match status" value="1"/>
</dbReference>
<dbReference type="HAMAP" id="MF_00318">
    <property type="entry name" value="Enolase"/>
    <property type="match status" value="1"/>
</dbReference>
<dbReference type="InterPro" id="IPR000941">
    <property type="entry name" value="Enolase"/>
</dbReference>
<dbReference type="InterPro" id="IPR036849">
    <property type="entry name" value="Enolase-like_C_sf"/>
</dbReference>
<dbReference type="InterPro" id="IPR029017">
    <property type="entry name" value="Enolase-like_N"/>
</dbReference>
<dbReference type="InterPro" id="IPR020810">
    <property type="entry name" value="Enolase_C"/>
</dbReference>
<dbReference type="InterPro" id="IPR020809">
    <property type="entry name" value="Enolase_CS"/>
</dbReference>
<dbReference type="InterPro" id="IPR020811">
    <property type="entry name" value="Enolase_N"/>
</dbReference>
<dbReference type="NCBIfam" id="TIGR01060">
    <property type="entry name" value="eno"/>
    <property type="match status" value="1"/>
</dbReference>
<dbReference type="PANTHER" id="PTHR11902">
    <property type="entry name" value="ENOLASE"/>
    <property type="match status" value="1"/>
</dbReference>
<dbReference type="PANTHER" id="PTHR11902:SF1">
    <property type="entry name" value="ENOLASE"/>
    <property type="match status" value="1"/>
</dbReference>
<dbReference type="Pfam" id="PF00113">
    <property type="entry name" value="Enolase_C"/>
    <property type="match status" value="1"/>
</dbReference>
<dbReference type="Pfam" id="PF03952">
    <property type="entry name" value="Enolase_N"/>
    <property type="match status" value="1"/>
</dbReference>
<dbReference type="PIRSF" id="PIRSF001400">
    <property type="entry name" value="Enolase"/>
    <property type="match status" value="1"/>
</dbReference>
<dbReference type="PRINTS" id="PR00148">
    <property type="entry name" value="ENOLASE"/>
</dbReference>
<dbReference type="SFLD" id="SFLDS00001">
    <property type="entry name" value="Enolase"/>
    <property type="match status" value="1"/>
</dbReference>
<dbReference type="SFLD" id="SFLDF00002">
    <property type="entry name" value="enolase"/>
    <property type="match status" value="1"/>
</dbReference>
<dbReference type="SMART" id="SM01192">
    <property type="entry name" value="Enolase_C"/>
    <property type="match status" value="1"/>
</dbReference>
<dbReference type="SMART" id="SM01193">
    <property type="entry name" value="Enolase_N"/>
    <property type="match status" value="1"/>
</dbReference>
<dbReference type="SUPFAM" id="SSF51604">
    <property type="entry name" value="Enolase C-terminal domain-like"/>
    <property type="match status" value="1"/>
</dbReference>
<dbReference type="SUPFAM" id="SSF54826">
    <property type="entry name" value="Enolase N-terminal domain-like"/>
    <property type="match status" value="1"/>
</dbReference>
<dbReference type="PROSITE" id="PS00164">
    <property type="entry name" value="ENOLASE"/>
    <property type="match status" value="1"/>
</dbReference>
<sequence length="429" mass="45202">MPVIEQVGAREILDSRGNPTVEVEVVLIDGTFARAAVPSGASTGEYEAVELRDGDGRYGGKGVKRAVDAVLDEIGPVVIGLNANDQRLIDQELLDLDGTPDKSRLGGNAILGVSLAVAKAAADSAELPLFRYIGGSNAHILPVPMMNILNGGAHADTAVDVQEFMVAPIGAPSFVEALRWGAEVYHALKSVLKKKGLSTGLGDEGGFAPEVAGTTAALDLVTLAIEAAGFKPGADVALALDAAATEFYTDGIGYHFEGMTHTADQMTEFYADLLGSYPLVSIEDPLSEDDWDGWAALTASIGEQVQIVGDDIFATNPERLEEGIGRGVANALLVKVNQIGTLTETLEAVALAHHSGYRTMISHRSGETEDTMIADLVVALGSGQIKTGAPARSERVAKYNQLLRIEEELGDAARYAGDLAFLRYVVETR</sequence>
<protein>
    <recommendedName>
        <fullName evidence="1">Enolase</fullName>
        <ecNumber evidence="1">4.2.1.11</ecNumber>
    </recommendedName>
    <alternativeName>
        <fullName evidence="1">2-phospho-D-glycerate hydro-lyase</fullName>
    </alternativeName>
    <alternativeName>
        <fullName evidence="1">2-phosphoglycerate dehydratase</fullName>
    </alternativeName>
</protein>
<proteinExistence type="inferred from homology"/>
<keyword id="KW-0963">Cytoplasm</keyword>
<keyword id="KW-0324">Glycolysis</keyword>
<keyword id="KW-0456">Lyase</keyword>
<keyword id="KW-0460">Magnesium</keyword>
<keyword id="KW-0479">Metal-binding</keyword>
<keyword id="KW-1185">Reference proteome</keyword>
<keyword id="KW-0964">Secreted</keyword>
<evidence type="ECO:0000255" key="1">
    <source>
        <dbReference type="HAMAP-Rule" id="MF_00318"/>
    </source>
</evidence>
<evidence type="ECO:0000305" key="2"/>
<organism>
    <name type="scientific">Mycobacterium leprae (strain TN)</name>
    <dbReference type="NCBI Taxonomy" id="272631"/>
    <lineage>
        <taxon>Bacteria</taxon>
        <taxon>Bacillati</taxon>
        <taxon>Actinomycetota</taxon>
        <taxon>Actinomycetes</taxon>
        <taxon>Mycobacteriales</taxon>
        <taxon>Mycobacteriaceae</taxon>
        <taxon>Mycobacterium</taxon>
    </lineage>
</organism>
<gene>
    <name evidence="1" type="primary">eno</name>
    <name type="ordered locus">ML0255</name>
</gene>
<feature type="chain" id="PRO_0000133925" description="Enolase">
    <location>
        <begin position="1"/>
        <end position="429"/>
    </location>
</feature>
<feature type="active site" description="Proton donor" evidence="1">
    <location>
        <position position="204"/>
    </location>
</feature>
<feature type="active site" description="Proton acceptor" evidence="1">
    <location>
        <position position="335"/>
    </location>
</feature>
<feature type="binding site" evidence="1">
    <location>
        <position position="162"/>
    </location>
    <ligand>
        <name>(2R)-2-phosphoglycerate</name>
        <dbReference type="ChEBI" id="CHEBI:58289"/>
    </ligand>
</feature>
<feature type="binding site" evidence="1">
    <location>
        <position position="241"/>
    </location>
    <ligand>
        <name>Mg(2+)</name>
        <dbReference type="ChEBI" id="CHEBI:18420"/>
    </ligand>
</feature>
<feature type="binding site" evidence="1">
    <location>
        <position position="283"/>
    </location>
    <ligand>
        <name>Mg(2+)</name>
        <dbReference type="ChEBI" id="CHEBI:18420"/>
    </ligand>
</feature>
<feature type="binding site" evidence="1">
    <location>
        <position position="310"/>
    </location>
    <ligand>
        <name>Mg(2+)</name>
        <dbReference type="ChEBI" id="CHEBI:18420"/>
    </ligand>
</feature>
<feature type="binding site" evidence="1">
    <location>
        <position position="335"/>
    </location>
    <ligand>
        <name>(2R)-2-phosphoglycerate</name>
        <dbReference type="ChEBI" id="CHEBI:58289"/>
    </ligand>
</feature>
<feature type="binding site" evidence="1">
    <location>
        <position position="364"/>
    </location>
    <ligand>
        <name>(2R)-2-phosphoglycerate</name>
        <dbReference type="ChEBI" id="CHEBI:58289"/>
    </ligand>
</feature>
<feature type="binding site" evidence="1">
    <location>
        <position position="365"/>
    </location>
    <ligand>
        <name>(2R)-2-phosphoglycerate</name>
        <dbReference type="ChEBI" id="CHEBI:58289"/>
    </ligand>
</feature>
<feature type="binding site" evidence="1">
    <location>
        <position position="386"/>
    </location>
    <ligand>
        <name>(2R)-2-phosphoglycerate</name>
        <dbReference type="ChEBI" id="CHEBI:58289"/>
    </ligand>
</feature>
<comment type="function">
    <text evidence="1">Catalyzes the reversible conversion of 2-phosphoglycerate (2-PG) into phosphoenolpyruvate (PEP). It is essential for the degradation of carbohydrates via glycolysis.</text>
</comment>
<comment type="catalytic activity">
    <reaction evidence="1">
        <text>(2R)-2-phosphoglycerate = phosphoenolpyruvate + H2O</text>
        <dbReference type="Rhea" id="RHEA:10164"/>
        <dbReference type="ChEBI" id="CHEBI:15377"/>
        <dbReference type="ChEBI" id="CHEBI:58289"/>
        <dbReference type="ChEBI" id="CHEBI:58702"/>
        <dbReference type="EC" id="4.2.1.11"/>
    </reaction>
</comment>
<comment type="cofactor">
    <cofactor evidence="1">
        <name>Mg(2+)</name>
        <dbReference type="ChEBI" id="CHEBI:18420"/>
    </cofactor>
    <text evidence="1">Binds a second Mg(2+) ion via substrate during catalysis.</text>
</comment>
<comment type="pathway">
    <text evidence="1">Carbohydrate degradation; glycolysis; pyruvate from D-glyceraldehyde 3-phosphate: step 4/5.</text>
</comment>
<comment type="subcellular location">
    <subcellularLocation>
        <location evidence="1">Cytoplasm</location>
    </subcellularLocation>
    <subcellularLocation>
        <location evidence="1">Secreted</location>
    </subcellularLocation>
    <subcellularLocation>
        <location evidence="1">Cell surface</location>
    </subcellularLocation>
    <text evidence="1">Fractions of enolase are present in both the cytoplasm and on the cell surface.</text>
</comment>
<comment type="similarity">
    <text evidence="1">Belongs to the enolase family.</text>
</comment>
<comment type="sequence caution" evidence="2">
    <conflict type="erroneous initiation">
        <sequence resource="EMBL-CDS" id="CAC29763"/>
    </conflict>
    <text>Extended N-terminus.</text>
</comment>
<reference key="1">
    <citation type="journal article" date="2001" name="Nature">
        <title>Massive gene decay in the leprosy bacillus.</title>
        <authorList>
            <person name="Cole S.T."/>
            <person name="Eiglmeier K."/>
            <person name="Parkhill J."/>
            <person name="James K.D."/>
            <person name="Thomson N.R."/>
            <person name="Wheeler P.R."/>
            <person name="Honore N."/>
            <person name="Garnier T."/>
            <person name="Churcher C.M."/>
            <person name="Harris D.E."/>
            <person name="Mungall K.L."/>
            <person name="Basham D."/>
            <person name="Brown D."/>
            <person name="Chillingworth T."/>
            <person name="Connor R."/>
            <person name="Davies R.M."/>
            <person name="Devlin K."/>
            <person name="Duthoy S."/>
            <person name="Feltwell T."/>
            <person name="Fraser A."/>
            <person name="Hamlin N."/>
            <person name="Holroyd S."/>
            <person name="Hornsby T."/>
            <person name="Jagels K."/>
            <person name="Lacroix C."/>
            <person name="Maclean J."/>
            <person name="Moule S."/>
            <person name="Murphy L.D."/>
            <person name="Oliver K."/>
            <person name="Quail M.A."/>
            <person name="Rajandream M.A."/>
            <person name="Rutherford K.M."/>
            <person name="Rutter S."/>
            <person name="Seeger K."/>
            <person name="Simon S."/>
            <person name="Simmonds M."/>
            <person name="Skelton J."/>
            <person name="Squares R."/>
            <person name="Squares S."/>
            <person name="Stevens K."/>
            <person name="Taylor K."/>
            <person name="Whitehead S."/>
            <person name="Woodward J.R."/>
            <person name="Barrell B.G."/>
        </authorList>
    </citation>
    <scope>NUCLEOTIDE SEQUENCE [LARGE SCALE GENOMIC DNA]</scope>
    <source>
        <strain>TN</strain>
    </source>
</reference>